<protein>
    <recommendedName>
        <fullName evidence="1">DNA-directed RNA polymerase subunit Rpo5</fullName>
        <ecNumber evidence="1">2.7.7.6</ecNumber>
    </recommendedName>
    <alternativeName>
        <fullName evidence="1">DNA-directed RNA polymerase subunit H</fullName>
    </alternativeName>
</protein>
<feature type="chain" id="PRO_0000146091" description="DNA-directed RNA polymerase subunit Rpo5">
    <location>
        <begin position="1"/>
        <end position="78"/>
    </location>
</feature>
<name>RPO5_METAC</name>
<evidence type="ECO:0000255" key="1">
    <source>
        <dbReference type="HAMAP-Rule" id="MF_00025"/>
    </source>
</evidence>
<reference key="1">
    <citation type="journal article" date="2002" name="Genome Res.">
        <title>The genome of Methanosarcina acetivorans reveals extensive metabolic and physiological diversity.</title>
        <authorList>
            <person name="Galagan J.E."/>
            <person name="Nusbaum C."/>
            <person name="Roy A."/>
            <person name="Endrizzi M.G."/>
            <person name="Macdonald P."/>
            <person name="FitzHugh W."/>
            <person name="Calvo S."/>
            <person name="Engels R."/>
            <person name="Smirnov S."/>
            <person name="Atnoor D."/>
            <person name="Brown A."/>
            <person name="Allen N."/>
            <person name="Naylor J."/>
            <person name="Stange-Thomann N."/>
            <person name="DeArellano K."/>
            <person name="Johnson R."/>
            <person name="Linton L."/>
            <person name="McEwan P."/>
            <person name="McKernan K."/>
            <person name="Talamas J."/>
            <person name="Tirrell A."/>
            <person name="Ye W."/>
            <person name="Zimmer A."/>
            <person name="Barber R.D."/>
            <person name="Cann I."/>
            <person name="Graham D.E."/>
            <person name="Grahame D.A."/>
            <person name="Guss A.M."/>
            <person name="Hedderich R."/>
            <person name="Ingram-Smith C."/>
            <person name="Kuettner H.C."/>
            <person name="Krzycki J.A."/>
            <person name="Leigh J.A."/>
            <person name="Li W."/>
            <person name="Liu J."/>
            <person name="Mukhopadhyay B."/>
            <person name="Reeve J.N."/>
            <person name="Smith K."/>
            <person name="Springer T.A."/>
            <person name="Umayam L.A."/>
            <person name="White O."/>
            <person name="White R.H."/>
            <person name="de Macario E.C."/>
            <person name="Ferry J.G."/>
            <person name="Jarrell K.F."/>
            <person name="Jing H."/>
            <person name="Macario A.J.L."/>
            <person name="Paulsen I.T."/>
            <person name="Pritchett M."/>
            <person name="Sowers K.R."/>
            <person name="Swanson R.V."/>
            <person name="Zinder S.H."/>
            <person name="Lander E."/>
            <person name="Metcalf W.W."/>
            <person name="Birren B."/>
        </authorList>
    </citation>
    <scope>NUCLEOTIDE SEQUENCE [LARGE SCALE GENOMIC DNA]</scope>
    <source>
        <strain>ATCC 35395 / DSM 2834 / JCM 12185 / C2A</strain>
    </source>
</reference>
<proteinExistence type="inferred from homology"/>
<accession>Q8TRB4</accession>
<organism>
    <name type="scientific">Methanosarcina acetivorans (strain ATCC 35395 / DSM 2834 / JCM 12185 / C2A)</name>
    <dbReference type="NCBI Taxonomy" id="188937"/>
    <lineage>
        <taxon>Archaea</taxon>
        <taxon>Methanobacteriati</taxon>
        <taxon>Methanobacteriota</taxon>
        <taxon>Stenosarchaea group</taxon>
        <taxon>Methanomicrobia</taxon>
        <taxon>Methanosarcinales</taxon>
        <taxon>Methanosarcinaceae</taxon>
        <taxon>Methanosarcina</taxon>
    </lineage>
</organism>
<sequence>MTKFSLLDHESVPKHEIISEGELKSVLSKYLIEKEQLPKIKVQDPVSKEIGAVVGDVVRITRKSQTAGEADYYRLVIE</sequence>
<comment type="function">
    <text evidence="1">DNA-dependent RNA polymerase (RNAP) catalyzes the transcription of DNA into RNA using the four ribonucleoside triphosphates as substrates.</text>
</comment>
<comment type="catalytic activity">
    <reaction evidence="1">
        <text>RNA(n) + a ribonucleoside 5'-triphosphate = RNA(n+1) + diphosphate</text>
        <dbReference type="Rhea" id="RHEA:21248"/>
        <dbReference type="Rhea" id="RHEA-COMP:14527"/>
        <dbReference type="Rhea" id="RHEA-COMP:17342"/>
        <dbReference type="ChEBI" id="CHEBI:33019"/>
        <dbReference type="ChEBI" id="CHEBI:61557"/>
        <dbReference type="ChEBI" id="CHEBI:140395"/>
        <dbReference type="EC" id="2.7.7.6"/>
    </reaction>
</comment>
<comment type="subunit">
    <text evidence="1">Part of the RNA polymerase complex.</text>
</comment>
<comment type="subcellular location">
    <subcellularLocation>
        <location evidence="1">Cytoplasm</location>
    </subcellularLocation>
</comment>
<comment type="similarity">
    <text evidence="1">Belongs to the archaeal Rpo5/eukaryotic RPB5 RNA polymerase subunit family.</text>
</comment>
<dbReference type="EC" id="2.7.7.6" evidence="1"/>
<dbReference type="EMBL" id="AE010299">
    <property type="protein sequence ID" value="AAM04685.1"/>
    <property type="molecule type" value="Genomic_DNA"/>
</dbReference>
<dbReference type="RefSeq" id="WP_011021287.1">
    <property type="nucleotide sequence ID" value="NC_003552.1"/>
</dbReference>
<dbReference type="SMR" id="Q8TRB4"/>
<dbReference type="FunCoup" id="Q8TRB4">
    <property type="interactions" value="2"/>
</dbReference>
<dbReference type="STRING" id="188937.MA_1266"/>
<dbReference type="EnsemblBacteria" id="AAM04685">
    <property type="protein sequence ID" value="AAM04685"/>
    <property type="gene ID" value="MA_1266"/>
</dbReference>
<dbReference type="GeneID" id="1473154"/>
<dbReference type="KEGG" id="mac:MA_1266"/>
<dbReference type="HOGENOM" id="CLU_058320_4_0_2"/>
<dbReference type="InParanoid" id="Q8TRB4"/>
<dbReference type="OrthoDB" id="30537at2157"/>
<dbReference type="PhylomeDB" id="Q8TRB4"/>
<dbReference type="Proteomes" id="UP000002487">
    <property type="component" value="Chromosome"/>
</dbReference>
<dbReference type="GO" id="GO:0005737">
    <property type="term" value="C:cytoplasm"/>
    <property type="evidence" value="ECO:0007669"/>
    <property type="project" value="UniProtKB-SubCell"/>
</dbReference>
<dbReference type="GO" id="GO:0000428">
    <property type="term" value="C:DNA-directed RNA polymerase complex"/>
    <property type="evidence" value="ECO:0007669"/>
    <property type="project" value="UniProtKB-KW"/>
</dbReference>
<dbReference type="GO" id="GO:0003677">
    <property type="term" value="F:DNA binding"/>
    <property type="evidence" value="ECO:0007669"/>
    <property type="project" value="InterPro"/>
</dbReference>
<dbReference type="GO" id="GO:0003899">
    <property type="term" value="F:DNA-directed RNA polymerase activity"/>
    <property type="evidence" value="ECO:0007669"/>
    <property type="project" value="UniProtKB-UniRule"/>
</dbReference>
<dbReference type="GO" id="GO:0006351">
    <property type="term" value="P:DNA-templated transcription"/>
    <property type="evidence" value="ECO:0007669"/>
    <property type="project" value="UniProtKB-UniRule"/>
</dbReference>
<dbReference type="Gene3D" id="3.90.940.20">
    <property type="entry name" value="RPB5-like RNA polymerase subunit"/>
    <property type="match status" value="1"/>
</dbReference>
<dbReference type="HAMAP" id="MF_00025">
    <property type="entry name" value="RNApol_Rpo5_RPB5"/>
    <property type="match status" value="1"/>
</dbReference>
<dbReference type="InterPro" id="IPR014381">
    <property type="entry name" value="Arch_Rpo5/euc_Rpb5"/>
</dbReference>
<dbReference type="InterPro" id="IPR000783">
    <property type="entry name" value="RNA_pol_subH/Rpb5_C"/>
</dbReference>
<dbReference type="InterPro" id="IPR020608">
    <property type="entry name" value="RNA_pol_subH/Rpb5_CS"/>
</dbReference>
<dbReference type="InterPro" id="IPR035913">
    <property type="entry name" value="RPB5-like_sf"/>
</dbReference>
<dbReference type="NCBIfam" id="NF007129">
    <property type="entry name" value="PRK09570.1"/>
    <property type="match status" value="1"/>
</dbReference>
<dbReference type="PANTHER" id="PTHR10535">
    <property type="entry name" value="DNA-DIRECTED RNA POLYMERASES I, II, AND III SUBUNIT RPABC1"/>
    <property type="match status" value="1"/>
</dbReference>
<dbReference type="PANTHER" id="PTHR10535:SF0">
    <property type="entry name" value="DNA-DIRECTED RNA POLYMERASES I, II, AND III SUBUNIT RPABC1"/>
    <property type="match status" value="1"/>
</dbReference>
<dbReference type="Pfam" id="PF01191">
    <property type="entry name" value="RNA_pol_Rpb5_C"/>
    <property type="match status" value="1"/>
</dbReference>
<dbReference type="SUPFAM" id="SSF55287">
    <property type="entry name" value="RPB5-like RNA polymerase subunit"/>
    <property type="match status" value="1"/>
</dbReference>
<dbReference type="PROSITE" id="PS01110">
    <property type="entry name" value="RNA_POL_H_23KD"/>
    <property type="match status" value="1"/>
</dbReference>
<keyword id="KW-0963">Cytoplasm</keyword>
<keyword id="KW-0240">DNA-directed RNA polymerase</keyword>
<keyword id="KW-0548">Nucleotidyltransferase</keyword>
<keyword id="KW-1185">Reference proteome</keyword>
<keyword id="KW-0804">Transcription</keyword>
<keyword id="KW-0808">Transferase</keyword>
<gene>
    <name evidence="1" type="primary">rpo5</name>
    <name evidence="1" type="synonym">rpoH</name>
    <name type="ordered locus">MA_1266</name>
</gene>